<organism>
    <name type="scientific">Nitrosomonas europaea (strain ATCC 19718 / CIP 103999 / KCTC 2705 / NBRC 14298)</name>
    <dbReference type="NCBI Taxonomy" id="228410"/>
    <lineage>
        <taxon>Bacteria</taxon>
        <taxon>Pseudomonadati</taxon>
        <taxon>Pseudomonadota</taxon>
        <taxon>Betaproteobacteria</taxon>
        <taxon>Nitrosomonadales</taxon>
        <taxon>Nitrosomonadaceae</taxon>
        <taxon>Nitrosomonas</taxon>
    </lineage>
</organism>
<reference key="1">
    <citation type="journal article" date="2003" name="J. Bacteriol.">
        <title>Complete genome sequence of the ammonia-oxidizing bacterium and obligate chemolithoautotroph Nitrosomonas europaea.</title>
        <authorList>
            <person name="Chain P."/>
            <person name="Lamerdin J.E."/>
            <person name="Larimer F.W."/>
            <person name="Regala W."/>
            <person name="Lao V."/>
            <person name="Land M.L."/>
            <person name="Hauser L."/>
            <person name="Hooper A.B."/>
            <person name="Klotz M.G."/>
            <person name="Norton J."/>
            <person name="Sayavedra-Soto L.A."/>
            <person name="Arciero D.M."/>
            <person name="Hommes N.G."/>
            <person name="Whittaker M.M."/>
            <person name="Arp D.J."/>
        </authorList>
    </citation>
    <scope>NUCLEOTIDE SEQUENCE [LARGE SCALE GENOMIC DNA]</scope>
    <source>
        <strain>ATCC 19718 / CIP 103999 / KCTC 2705 / NBRC 14298</strain>
    </source>
</reference>
<feature type="chain" id="PRO_0000178078" description="Apolipoprotein N-acyltransferase">
    <location>
        <begin position="1"/>
        <end position="497"/>
    </location>
</feature>
<feature type="transmembrane region" description="Helical" evidence="1">
    <location>
        <begin position="21"/>
        <end position="41"/>
    </location>
</feature>
<feature type="transmembrane region" description="Helical" evidence="1">
    <location>
        <begin position="51"/>
        <end position="71"/>
    </location>
</feature>
<feature type="transmembrane region" description="Helical" evidence="1">
    <location>
        <begin position="85"/>
        <end position="105"/>
    </location>
</feature>
<feature type="transmembrane region" description="Helical" evidence="1">
    <location>
        <begin position="119"/>
        <end position="139"/>
    </location>
</feature>
<feature type="transmembrane region" description="Helical" evidence="1">
    <location>
        <begin position="157"/>
        <end position="177"/>
    </location>
</feature>
<feature type="transmembrane region" description="Helical" evidence="1">
    <location>
        <begin position="189"/>
        <end position="209"/>
    </location>
</feature>
<feature type="transmembrane region" description="Helical" evidence="1">
    <location>
        <begin position="472"/>
        <end position="492"/>
    </location>
</feature>
<feature type="domain" description="CN hydrolase" evidence="1">
    <location>
        <begin position="221"/>
        <end position="461"/>
    </location>
</feature>
<feature type="active site" description="Proton acceptor" evidence="1">
    <location>
        <position position="259"/>
    </location>
</feature>
<feature type="active site" evidence="1">
    <location>
        <position position="319"/>
    </location>
</feature>
<feature type="active site" description="Nucleophile" evidence="1">
    <location>
        <position position="371"/>
    </location>
</feature>
<evidence type="ECO:0000255" key="1">
    <source>
        <dbReference type="HAMAP-Rule" id="MF_01148"/>
    </source>
</evidence>
<accession>Q820C9</accession>
<dbReference type="EC" id="2.3.1.269" evidence="1"/>
<dbReference type="EMBL" id="AL954747">
    <property type="protein sequence ID" value="CAD85099.1"/>
    <property type="molecule type" value="Genomic_DNA"/>
</dbReference>
<dbReference type="RefSeq" id="WP_011111777.1">
    <property type="nucleotide sequence ID" value="NC_004757.1"/>
</dbReference>
<dbReference type="SMR" id="Q820C9"/>
<dbReference type="STRING" id="228410.NE1188"/>
<dbReference type="DNASU" id="1082132"/>
<dbReference type="GeneID" id="87104367"/>
<dbReference type="KEGG" id="neu:NE1188"/>
<dbReference type="eggNOG" id="COG0815">
    <property type="taxonomic scope" value="Bacteria"/>
</dbReference>
<dbReference type="HOGENOM" id="CLU_019563_3_0_4"/>
<dbReference type="OrthoDB" id="9804277at2"/>
<dbReference type="PhylomeDB" id="Q820C9"/>
<dbReference type="UniPathway" id="UPA00666"/>
<dbReference type="Proteomes" id="UP000001416">
    <property type="component" value="Chromosome"/>
</dbReference>
<dbReference type="GO" id="GO:0005886">
    <property type="term" value="C:plasma membrane"/>
    <property type="evidence" value="ECO:0007669"/>
    <property type="project" value="UniProtKB-SubCell"/>
</dbReference>
<dbReference type="GO" id="GO:0016410">
    <property type="term" value="F:N-acyltransferase activity"/>
    <property type="evidence" value="ECO:0007669"/>
    <property type="project" value="UniProtKB-UniRule"/>
</dbReference>
<dbReference type="GO" id="GO:0042158">
    <property type="term" value="P:lipoprotein biosynthetic process"/>
    <property type="evidence" value="ECO:0007669"/>
    <property type="project" value="UniProtKB-UniRule"/>
</dbReference>
<dbReference type="CDD" id="cd07571">
    <property type="entry name" value="ALP_N-acyl_transferase"/>
    <property type="match status" value="1"/>
</dbReference>
<dbReference type="Gene3D" id="3.60.110.10">
    <property type="entry name" value="Carbon-nitrogen hydrolase"/>
    <property type="match status" value="1"/>
</dbReference>
<dbReference type="HAMAP" id="MF_01148">
    <property type="entry name" value="Lnt"/>
    <property type="match status" value="1"/>
</dbReference>
<dbReference type="InterPro" id="IPR004563">
    <property type="entry name" value="Apolipo_AcylTrfase"/>
</dbReference>
<dbReference type="InterPro" id="IPR003010">
    <property type="entry name" value="C-N_Hydrolase"/>
</dbReference>
<dbReference type="InterPro" id="IPR036526">
    <property type="entry name" value="C-N_Hydrolase_sf"/>
</dbReference>
<dbReference type="InterPro" id="IPR045378">
    <property type="entry name" value="LNT_N"/>
</dbReference>
<dbReference type="NCBIfam" id="TIGR00546">
    <property type="entry name" value="lnt"/>
    <property type="match status" value="1"/>
</dbReference>
<dbReference type="PANTHER" id="PTHR38686">
    <property type="entry name" value="APOLIPOPROTEIN N-ACYLTRANSFERASE"/>
    <property type="match status" value="1"/>
</dbReference>
<dbReference type="PANTHER" id="PTHR38686:SF1">
    <property type="entry name" value="APOLIPOPROTEIN N-ACYLTRANSFERASE"/>
    <property type="match status" value="1"/>
</dbReference>
<dbReference type="Pfam" id="PF00795">
    <property type="entry name" value="CN_hydrolase"/>
    <property type="match status" value="1"/>
</dbReference>
<dbReference type="Pfam" id="PF20154">
    <property type="entry name" value="LNT_N"/>
    <property type="match status" value="1"/>
</dbReference>
<dbReference type="SUPFAM" id="SSF56317">
    <property type="entry name" value="Carbon-nitrogen hydrolase"/>
    <property type="match status" value="1"/>
</dbReference>
<dbReference type="PROSITE" id="PS50263">
    <property type="entry name" value="CN_HYDROLASE"/>
    <property type="match status" value="1"/>
</dbReference>
<proteinExistence type="inferred from homology"/>
<name>LNT_NITEU</name>
<gene>
    <name evidence="1" type="primary">lnt</name>
    <name type="ordered locus">NE1188</name>
</gene>
<protein>
    <recommendedName>
        <fullName evidence="1">Apolipoprotein N-acyltransferase</fullName>
        <shortName evidence="1">ALP N-acyltransferase</shortName>
        <ecNumber evidence="1">2.3.1.269</ecNumber>
    </recommendedName>
</protein>
<comment type="function">
    <text evidence="1">Catalyzes the phospholipid dependent N-acylation of the N-terminal cysteine of apolipoprotein, the last step in lipoprotein maturation.</text>
</comment>
<comment type="catalytic activity">
    <reaction evidence="1">
        <text>N-terminal S-1,2-diacyl-sn-glyceryl-L-cysteinyl-[lipoprotein] + a glycerophospholipid = N-acyl-S-1,2-diacyl-sn-glyceryl-L-cysteinyl-[lipoprotein] + a 2-acyl-sn-glycero-3-phospholipid + H(+)</text>
        <dbReference type="Rhea" id="RHEA:48228"/>
        <dbReference type="Rhea" id="RHEA-COMP:14681"/>
        <dbReference type="Rhea" id="RHEA-COMP:14684"/>
        <dbReference type="ChEBI" id="CHEBI:15378"/>
        <dbReference type="ChEBI" id="CHEBI:136912"/>
        <dbReference type="ChEBI" id="CHEBI:140656"/>
        <dbReference type="ChEBI" id="CHEBI:140657"/>
        <dbReference type="ChEBI" id="CHEBI:140660"/>
        <dbReference type="EC" id="2.3.1.269"/>
    </reaction>
</comment>
<comment type="pathway">
    <text evidence="1">Protein modification; lipoprotein biosynthesis (N-acyl transfer).</text>
</comment>
<comment type="subcellular location">
    <subcellularLocation>
        <location evidence="1">Cell inner membrane</location>
        <topology evidence="1">Multi-pass membrane protein</topology>
    </subcellularLocation>
</comment>
<comment type="similarity">
    <text evidence="1">Belongs to the CN hydrolase family. Apolipoprotein N-acyltransferase subfamily.</text>
</comment>
<sequence length="497" mass="54905">MNGYFRLIAAFALGVATVSGFAPFYLYPIPVVTLALLALLWRRSRTPGQAALTGFTFGMGLFGAGVTWLYVSLHDFGHMEPALAVLALIILCAYLALFPALTGWITAFRHFRASWAWPGMVAALWALAEWLRGTLFTGFPWLTVGYSQAPASPLAGFAPVIGVYGLSLLLMLSAAWLACWLENRQSHRFWLGLGSVWLIGFGLQQIHWTQPEGEPVTVSLLQGNIPQNMKWQPEHLAATMQIYAELVQESPSRLIVTPEISFPLFYEQAPQDYLALLAEHARSRQGDLLIGMAERSSSDNGYYNTMFSFGTSPEQSYRKYHLVPFGEYIPLKPVFGWIIDVLHIPLSDFSRGGLDQQPLDLAGQQVAVNICYEDVFGEEIIMQLPQASLLVNVSNDAWFGRSIGPRQHLQISQMRALETGRYMLRATNTGVTAIIDERGRVLEQLDMFTTAGLHSTAQGFGGATPYVRFGNSLVFALIGLLLLAGSLAAFSGRRKTL</sequence>
<keyword id="KW-0012">Acyltransferase</keyword>
<keyword id="KW-0997">Cell inner membrane</keyword>
<keyword id="KW-1003">Cell membrane</keyword>
<keyword id="KW-0472">Membrane</keyword>
<keyword id="KW-1185">Reference proteome</keyword>
<keyword id="KW-0808">Transferase</keyword>
<keyword id="KW-0812">Transmembrane</keyword>
<keyword id="KW-1133">Transmembrane helix</keyword>